<feature type="chain" id="PRO_1000213202" description="23S rRNA (uracil(747)-C(5))-methyltransferase RlmC">
    <location>
        <begin position="1"/>
        <end position="376"/>
    </location>
</feature>
<feature type="active site" description="Nucleophile" evidence="1">
    <location>
        <position position="334"/>
    </location>
</feature>
<feature type="binding site" evidence="1">
    <location>
        <position position="3"/>
    </location>
    <ligand>
        <name>[4Fe-4S] cluster</name>
        <dbReference type="ChEBI" id="CHEBI:49883"/>
    </ligand>
</feature>
<feature type="binding site" evidence="1">
    <location>
        <position position="11"/>
    </location>
    <ligand>
        <name>[4Fe-4S] cluster</name>
        <dbReference type="ChEBI" id="CHEBI:49883"/>
    </ligand>
</feature>
<feature type="binding site" evidence="1">
    <location>
        <position position="14"/>
    </location>
    <ligand>
        <name>[4Fe-4S] cluster</name>
        <dbReference type="ChEBI" id="CHEBI:49883"/>
    </ligand>
</feature>
<feature type="binding site" evidence="1">
    <location>
        <position position="87"/>
    </location>
    <ligand>
        <name>[4Fe-4S] cluster</name>
        <dbReference type="ChEBI" id="CHEBI:49883"/>
    </ligand>
</feature>
<feature type="binding site" evidence="1">
    <location>
        <position position="212"/>
    </location>
    <ligand>
        <name>S-adenosyl-L-methionine</name>
        <dbReference type="ChEBI" id="CHEBI:59789"/>
    </ligand>
</feature>
<feature type="binding site" evidence="1">
    <location>
        <position position="241"/>
    </location>
    <ligand>
        <name>S-adenosyl-L-methionine</name>
        <dbReference type="ChEBI" id="CHEBI:59789"/>
    </ligand>
</feature>
<feature type="binding site" evidence="1">
    <location>
        <position position="262"/>
    </location>
    <ligand>
        <name>S-adenosyl-L-methionine</name>
        <dbReference type="ChEBI" id="CHEBI:59789"/>
    </ligand>
</feature>
<feature type="binding site" evidence="1">
    <location>
        <position position="307"/>
    </location>
    <ligand>
        <name>S-adenosyl-L-methionine</name>
        <dbReference type="ChEBI" id="CHEBI:59789"/>
    </ligand>
</feature>
<name>RLMC_PECCP</name>
<comment type="function">
    <text evidence="1">Catalyzes the formation of 5-methyl-uridine at position 747 (m5U747) in 23S rRNA.</text>
</comment>
<comment type="catalytic activity">
    <reaction evidence="1">
        <text>uridine(747) in 23S rRNA + S-adenosyl-L-methionine = 5-methyluridine(747) in 23S rRNA + S-adenosyl-L-homocysteine + H(+)</text>
        <dbReference type="Rhea" id="RHEA:42628"/>
        <dbReference type="Rhea" id="RHEA-COMP:10154"/>
        <dbReference type="Rhea" id="RHEA-COMP:10155"/>
        <dbReference type="ChEBI" id="CHEBI:15378"/>
        <dbReference type="ChEBI" id="CHEBI:57856"/>
        <dbReference type="ChEBI" id="CHEBI:59789"/>
        <dbReference type="ChEBI" id="CHEBI:65315"/>
        <dbReference type="ChEBI" id="CHEBI:74447"/>
        <dbReference type="EC" id="2.1.1.189"/>
    </reaction>
</comment>
<comment type="similarity">
    <text evidence="1">Belongs to the class I-like SAM-binding methyltransferase superfamily. RNA M5U methyltransferase family. RlmC subfamily.</text>
</comment>
<gene>
    <name evidence="1" type="primary">rlmC</name>
    <name type="synonym">rumB</name>
    <name type="ordered locus">PC1_1697</name>
</gene>
<reference key="1">
    <citation type="submission" date="2009-07" db="EMBL/GenBank/DDBJ databases">
        <title>Complete sequence of Pectobacterium carotovorum subsp. carotovorum PC1.</title>
        <authorList>
            <consortium name="US DOE Joint Genome Institute"/>
            <person name="Lucas S."/>
            <person name="Copeland A."/>
            <person name="Lapidus A."/>
            <person name="Glavina del Rio T."/>
            <person name="Tice H."/>
            <person name="Bruce D."/>
            <person name="Goodwin L."/>
            <person name="Pitluck S."/>
            <person name="Munk A.C."/>
            <person name="Brettin T."/>
            <person name="Detter J.C."/>
            <person name="Han C."/>
            <person name="Tapia R."/>
            <person name="Larimer F."/>
            <person name="Land M."/>
            <person name="Hauser L."/>
            <person name="Kyrpides N."/>
            <person name="Mikhailova N."/>
            <person name="Balakrishnan V."/>
            <person name="Glasner J."/>
            <person name="Perna N.T."/>
        </authorList>
    </citation>
    <scope>NUCLEOTIDE SEQUENCE [LARGE SCALE GENOMIC DNA]</scope>
    <source>
        <strain>PC1</strain>
    </source>
</reference>
<dbReference type="EC" id="2.1.1.189" evidence="1"/>
<dbReference type="EMBL" id="CP001657">
    <property type="protein sequence ID" value="ACT12738.1"/>
    <property type="molecule type" value="Genomic_DNA"/>
</dbReference>
<dbReference type="RefSeq" id="WP_015839953.1">
    <property type="nucleotide sequence ID" value="NC_012917.1"/>
</dbReference>
<dbReference type="SMR" id="C6DEQ3"/>
<dbReference type="STRING" id="561230.PC1_1697"/>
<dbReference type="KEGG" id="pct:PC1_1697"/>
<dbReference type="eggNOG" id="COG2265">
    <property type="taxonomic scope" value="Bacteria"/>
</dbReference>
<dbReference type="HOGENOM" id="CLU_014689_0_0_6"/>
<dbReference type="OrthoDB" id="9804590at2"/>
<dbReference type="Proteomes" id="UP000002736">
    <property type="component" value="Chromosome"/>
</dbReference>
<dbReference type="GO" id="GO:0051539">
    <property type="term" value="F:4 iron, 4 sulfur cluster binding"/>
    <property type="evidence" value="ECO:0007669"/>
    <property type="project" value="UniProtKB-KW"/>
</dbReference>
<dbReference type="GO" id="GO:0005506">
    <property type="term" value="F:iron ion binding"/>
    <property type="evidence" value="ECO:0007669"/>
    <property type="project" value="UniProtKB-UniRule"/>
</dbReference>
<dbReference type="GO" id="GO:0070041">
    <property type="term" value="F:rRNA (uridine-C5-)-methyltransferase activity"/>
    <property type="evidence" value="ECO:0007669"/>
    <property type="project" value="UniProtKB-UniRule"/>
</dbReference>
<dbReference type="GO" id="GO:0070475">
    <property type="term" value="P:rRNA base methylation"/>
    <property type="evidence" value="ECO:0007669"/>
    <property type="project" value="TreeGrafter"/>
</dbReference>
<dbReference type="CDD" id="cd02440">
    <property type="entry name" value="AdoMet_MTases"/>
    <property type="match status" value="1"/>
</dbReference>
<dbReference type="FunFam" id="2.40.50.1070:FF:000002">
    <property type="entry name" value="23S rRNA (uracil(747)-C(5))-methyltransferase RlmC"/>
    <property type="match status" value="1"/>
</dbReference>
<dbReference type="Gene3D" id="2.40.50.1070">
    <property type="match status" value="1"/>
</dbReference>
<dbReference type="Gene3D" id="3.40.50.150">
    <property type="entry name" value="Vaccinia Virus protein VP39"/>
    <property type="match status" value="1"/>
</dbReference>
<dbReference type="HAMAP" id="MF_01012">
    <property type="entry name" value="23SrRNA_methyltr_RlmC"/>
    <property type="match status" value="1"/>
</dbReference>
<dbReference type="InterPro" id="IPR011825">
    <property type="entry name" value="23SrRNA_MeTrfase_RlmC"/>
</dbReference>
<dbReference type="InterPro" id="IPR030390">
    <property type="entry name" value="MeTrfase_TrmA_AS"/>
</dbReference>
<dbReference type="InterPro" id="IPR030391">
    <property type="entry name" value="MeTrfase_TrmA_CS"/>
</dbReference>
<dbReference type="InterPro" id="IPR029063">
    <property type="entry name" value="SAM-dependent_MTases_sf"/>
</dbReference>
<dbReference type="InterPro" id="IPR010280">
    <property type="entry name" value="U5_MeTrfase_fam"/>
</dbReference>
<dbReference type="NCBIfam" id="TIGR02085">
    <property type="entry name" value="meth_trns_rumB"/>
    <property type="match status" value="1"/>
</dbReference>
<dbReference type="PANTHER" id="PTHR11061">
    <property type="entry name" value="RNA M5U METHYLTRANSFERASE"/>
    <property type="match status" value="1"/>
</dbReference>
<dbReference type="PANTHER" id="PTHR11061:SF30">
    <property type="entry name" value="TRNA (URACIL(54)-C(5))-METHYLTRANSFERASE"/>
    <property type="match status" value="1"/>
</dbReference>
<dbReference type="Pfam" id="PF05958">
    <property type="entry name" value="tRNA_U5-meth_tr"/>
    <property type="match status" value="1"/>
</dbReference>
<dbReference type="SUPFAM" id="SSF53335">
    <property type="entry name" value="S-adenosyl-L-methionine-dependent methyltransferases"/>
    <property type="match status" value="1"/>
</dbReference>
<dbReference type="PROSITE" id="PS51687">
    <property type="entry name" value="SAM_MT_RNA_M5U"/>
    <property type="match status" value="1"/>
</dbReference>
<dbReference type="PROSITE" id="PS01230">
    <property type="entry name" value="TRMA_1"/>
    <property type="match status" value="1"/>
</dbReference>
<dbReference type="PROSITE" id="PS01231">
    <property type="entry name" value="TRMA_2"/>
    <property type="match status" value="1"/>
</dbReference>
<evidence type="ECO:0000255" key="1">
    <source>
        <dbReference type="HAMAP-Rule" id="MF_01012"/>
    </source>
</evidence>
<proteinExistence type="inferred from homology"/>
<accession>C6DEQ3</accession>
<sequence>MHCARYSTGTCRSCQWLEKAYPQQLSDKQQHLEGLLQPHAVQRWLPVQPSAQSAFRNKAKMVVSGSVERPLLGMLHRDGTAVDLCDCPLYPSSFASVFDVLKVFIARAGLTPYNVARRRGELKYLLLTESTQRGTFMLRFVLRSETKLAQLRAALPWLQQQLPQLEVISANIQPVHQAIMEGKTEIILSEAAALAEQFNQVPLYIRPQSFFQTNPQVAAALYATARDWVAELNITSMWDLFCGVGGFGLHCASPEMRLTGIEISAEAIACARRSAEQLGLKQVEFQALDSTQFATGKAEIPELVLVNPPRRGIGSELCTYLSRMAPDYILYSSCNAESMAKDMTELTNYRALRVQLFDMFPHTAHYEVLTLLKREI</sequence>
<protein>
    <recommendedName>
        <fullName evidence="1">23S rRNA (uracil(747)-C(5))-methyltransferase RlmC</fullName>
        <ecNumber evidence="1">2.1.1.189</ecNumber>
    </recommendedName>
    <alternativeName>
        <fullName evidence="1">23S rRNA(m5U747)-methyltransferase</fullName>
    </alternativeName>
</protein>
<keyword id="KW-0004">4Fe-4S</keyword>
<keyword id="KW-0408">Iron</keyword>
<keyword id="KW-0411">Iron-sulfur</keyword>
<keyword id="KW-0479">Metal-binding</keyword>
<keyword id="KW-0489">Methyltransferase</keyword>
<keyword id="KW-0698">rRNA processing</keyword>
<keyword id="KW-0949">S-adenosyl-L-methionine</keyword>
<keyword id="KW-0808">Transferase</keyword>
<organism>
    <name type="scientific">Pectobacterium carotovorum subsp. carotovorum (strain PC1)</name>
    <dbReference type="NCBI Taxonomy" id="561230"/>
    <lineage>
        <taxon>Bacteria</taxon>
        <taxon>Pseudomonadati</taxon>
        <taxon>Pseudomonadota</taxon>
        <taxon>Gammaproteobacteria</taxon>
        <taxon>Enterobacterales</taxon>
        <taxon>Pectobacteriaceae</taxon>
        <taxon>Pectobacterium</taxon>
    </lineage>
</organism>